<dbReference type="EC" id="3.5.4.19" evidence="1"/>
<dbReference type="EMBL" id="CP001215">
    <property type="protein sequence ID" value="ACP16886.1"/>
    <property type="molecule type" value="Genomic_DNA"/>
</dbReference>
<dbReference type="RefSeq" id="WP_000803978.1">
    <property type="nucleotide sequence ID" value="NC_012581.1"/>
</dbReference>
<dbReference type="SMR" id="C3L9P6"/>
<dbReference type="GeneID" id="45021410"/>
<dbReference type="KEGG" id="bah:BAMEG_3164"/>
<dbReference type="HOGENOM" id="CLU_048577_5_3_9"/>
<dbReference type="UniPathway" id="UPA00031">
    <property type="reaction ID" value="UER00008"/>
</dbReference>
<dbReference type="GO" id="GO:0005737">
    <property type="term" value="C:cytoplasm"/>
    <property type="evidence" value="ECO:0007669"/>
    <property type="project" value="UniProtKB-SubCell"/>
</dbReference>
<dbReference type="GO" id="GO:0000287">
    <property type="term" value="F:magnesium ion binding"/>
    <property type="evidence" value="ECO:0007669"/>
    <property type="project" value="UniProtKB-UniRule"/>
</dbReference>
<dbReference type="GO" id="GO:0004635">
    <property type="term" value="F:phosphoribosyl-AMP cyclohydrolase activity"/>
    <property type="evidence" value="ECO:0007669"/>
    <property type="project" value="UniProtKB-UniRule"/>
</dbReference>
<dbReference type="GO" id="GO:0008270">
    <property type="term" value="F:zinc ion binding"/>
    <property type="evidence" value="ECO:0007669"/>
    <property type="project" value="UniProtKB-UniRule"/>
</dbReference>
<dbReference type="GO" id="GO:0000105">
    <property type="term" value="P:L-histidine biosynthetic process"/>
    <property type="evidence" value="ECO:0007669"/>
    <property type="project" value="UniProtKB-UniRule"/>
</dbReference>
<dbReference type="FunFam" id="3.10.20.810:FF:000001">
    <property type="entry name" value="Histidine biosynthesis bifunctional protein HisIE"/>
    <property type="match status" value="1"/>
</dbReference>
<dbReference type="Gene3D" id="3.10.20.810">
    <property type="entry name" value="Phosphoribosyl-AMP cyclohydrolase"/>
    <property type="match status" value="1"/>
</dbReference>
<dbReference type="HAMAP" id="MF_01021">
    <property type="entry name" value="HisI"/>
    <property type="match status" value="1"/>
</dbReference>
<dbReference type="InterPro" id="IPR026660">
    <property type="entry name" value="PRA-CH"/>
</dbReference>
<dbReference type="InterPro" id="IPR002496">
    <property type="entry name" value="PRib_AMP_CycHydrolase_dom"/>
</dbReference>
<dbReference type="InterPro" id="IPR038019">
    <property type="entry name" value="PRib_AMP_CycHydrolase_sf"/>
</dbReference>
<dbReference type="NCBIfam" id="NF000768">
    <property type="entry name" value="PRK00051.1"/>
    <property type="match status" value="1"/>
</dbReference>
<dbReference type="PANTHER" id="PTHR42945">
    <property type="entry name" value="HISTIDINE BIOSYNTHESIS BIFUNCTIONAL PROTEIN"/>
    <property type="match status" value="1"/>
</dbReference>
<dbReference type="PANTHER" id="PTHR42945:SF1">
    <property type="entry name" value="HISTIDINE BIOSYNTHESIS BIFUNCTIONAL PROTEIN HIS7"/>
    <property type="match status" value="1"/>
</dbReference>
<dbReference type="Pfam" id="PF01502">
    <property type="entry name" value="PRA-CH"/>
    <property type="match status" value="1"/>
</dbReference>
<dbReference type="SUPFAM" id="SSF141734">
    <property type="entry name" value="HisI-like"/>
    <property type="match status" value="1"/>
</dbReference>
<sequence length="101" mass="11655">MKPNFSKGLLPAVVIEEGTKEVLMLAYMNEEAYEKTLKTKRTWFYSRSRRSLWNKGETSGHVQHVQSLYLDCDQDAIVVFVKQVGPACHTGEKTCFHYKII</sequence>
<evidence type="ECO:0000255" key="1">
    <source>
        <dbReference type="HAMAP-Rule" id="MF_01021"/>
    </source>
</evidence>
<proteinExistence type="inferred from homology"/>
<protein>
    <recommendedName>
        <fullName evidence="1">Phosphoribosyl-AMP cyclohydrolase</fullName>
        <shortName evidence="1">PRA-CH</shortName>
        <ecNumber evidence="1">3.5.4.19</ecNumber>
    </recommendedName>
</protein>
<accession>C3L9P6</accession>
<gene>
    <name evidence="1" type="primary">hisI</name>
    <name type="ordered locus">BAMEG_3164</name>
</gene>
<keyword id="KW-0028">Amino-acid biosynthesis</keyword>
<keyword id="KW-0963">Cytoplasm</keyword>
<keyword id="KW-0368">Histidine biosynthesis</keyword>
<keyword id="KW-0378">Hydrolase</keyword>
<keyword id="KW-0460">Magnesium</keyword>
<keyword id="KW-0479">Metal-binding</keyword>
<keyword id="KW-0862">Zinc</keyword>
<reference key="1">
    <citation type="submission" date="2008-10" db="EMBL/GenBank/DDBJ databases">
        <title>Genome sequence of Bacillus anthracis str. CDC 684.</title>
        <authorList>
            <person name="Dodson R.J."/>
            <person name="Munk A.C."/>
            <person name="Brettin T."/>
            <person name="Bruce D."/>
            <person name="Detter C."/>
            <person name="Tapia R."/>
            <person name="Han C."/>
            <person name="Sutton G."/>
            <person name="Sims D."/>
        </authorList>
    </citation>
    <scope>NUCLEOTIDE SEQUENCE [LARGE SCALE GENOMIC DNA]</scope>
    <source>
        <strain>CDC 684 / NRRL 3495</strain>
    </source>
</reference>
<organism>
    <name type="scientific">Bacillus anthracis (strain CDC 684 / NRRL 3495)</name>
    <dbReference type="NCBI Taxonomy" id="568206"/>
    <lineage>
        <taxon>Bacteria</taxon>
        <taxon>Bacillati</taxon>
        <taxon>Bacillota</taxon>
        <taxon>Bacilli</taxon>
        <taxon>Bacillales</taxon>
        <taxon>Bacillaceae</taxon>
        <taxon>Bacillus</taxon>
        <taxon>Bacillus cereus group</taxon>
    </lineage>
</organism>
<feature type="chain" id="PRO_1000149062" description="Phosphoribosyl-AMP cyclohydrolase">
    <location>
        <begin position="1"/>
        <end position="101"/>
    </location>
</feature>
<feature type="binding site" evidence="1">
    <location>
        <position position="71"/>
    </location>
    <ligand>
        <name>Mg(2+)</name>
        <dbReference type="ChEBI" id="CHEBI:18420"/>
    </ligand>
</feature>
<feature type="binding site" evidence="1">
    <location>
        <position position="72"/>
    </location>
    <ligand>
        <name>Zn(2+)</name>
        <dbReference type="ChEBI" id="CHEBI:29105"/>
        <note>ligand shared between dimeric partners</note>
    </ligand>
</feature>
<feature type="binding site" evidence="1">
    <location>
        <position position="73"/>
    </location>
    <ligand>
        <name>Mg(2+)</name>
        <dbReference type="ChEBI" id="CHEBI:18420"/>
    </ligand>
</feature>
<feature type="binding site" evidence="1">
    <location>
        <position position="75"/>
    </location>
    <ligand>
        <name>Mg(2+)</name>
        <dbReference type="ChEBI" id="CHEBI:18420"/>
    </ligand>
</feature>
<feature type="binding site" evidence="1">
    <location>
        <position position="88"/>
    </location>
    <ligand>
        <name>Zn(2+)</name>
        <dbReference type="ChEBI" id="CHEBI:29105"/>
        <note>ligand shared between dimeric partners</note>
    </ligand>
</feature>
<feature type="binding site" evidence="1">
    <location>
        <position position="95"/>
    </location>
    <ligand>
        <name>Zn(2+)</name>
        <dbReference type="ChEBI" id="CHEBI:29105"/>
        <note>ligand shared between dimeric partners</note>
    </ligand>
</feature>
<name>HIS3_BACAC</name>
<comment type="function">
    <text evidence="1">Catalyzes the hydrolysis of the adenine ring of phosphoribosyl-AMP.</text>
</comment>
<comment type="catalytic activity">
    <reaction evidence="1">
        <text>1-(5-phospho-beta-D-ribosyl)-5'-AMP + H2O = 1-(5-phospho-beta-D-ribosyl)-5-[(5-phospho-beta-D-ribosylamino)methylideneamino]imidazole-4-carboxamide</text>
        <dbReference type="Rhea" id="RHEA:20049"/>
        <dbReference type="ChEBI" id="CHEBI:15377"/>
        <dbReference type="ChEBI" id="CHEBI:58435"/>
        <dbReference type="ChEBI" id="CHEBI:59457"/>
        <dbReference type="EC" id="3.5.4.19"/>
    </reaction>
</comment>
<comment type="cofactor">
    <cofactor evidence="1">
        <name>Mg(2+)</name>
        <dbReference type="ChEBI" id="CHEBI:18420"/>
    </cofactor>
    <text evidence="1">Binds 1 Mg(2+) ion per subunit.</text>
</comment>
<comment type="cofactor">
    <cofactor evidence="1">
        <name>Zn(2+)</name>
        <dbReference type="ChEBI" id="CHEBI:29105"/>
    </cofactor>
    <text evidence="1">Binds 1 zinc ion per subunit.</text>
</comment>
<comment type="pathway">
    <text evidence="1">Amino-acid biosynthesis; L-histidine biosynthesis; L-histidine from 5-phospho-alpha-D-ribose 1-diphosphate: step 3/9.</text>
</comment>
<comment type="subunit">
    <text evidence="1">Homodimer.</text>
</comment>
<comment type="subcellular location">
    <subcellularLocation>
        <location evidence="1">Cytoplasm</location>
    </subcellularLocation>
</comment>
<comment type="similarity">
    <text evidence="1">Belongs to the PRA-CH family.</text>
</comment>